<organism>
    <name type="scientific">Daucus carota</name>
    <name type="common">Wild carrot</name>
    <dbReference type="NCBI Taxonomy" id="4039"/>
    <lineage>
        <taxon>Eukaryota</taxon>
        <taxon>Viridiplantae</taxon>
        <taxon>Streptophyta</taxon>
        <taxon>Embryophyta</taxon>
        <taxon>Tracheophyta</taxon>
        <taxon>Spermatophyta</taxon>
        <taxon>Magnoliopsida</taxon>
        <taxon>eudicotyledons</taxon>
        <taxon>Gunneridae</taxon>
        <taxon>Pentapetalae</taxon>
        <taxon>asterids</taxon>
        <taxon>campanulids</taxon>
        <taxon>Apiales</taxon>
        <taxon>Apiaceae</taxon>
        <taxon>Apioideae</taxon>
        <taxon>Scandiceae</taxon>
        <taxon>Daucinae</taxon>
        <taxon>Daucus</taxon>
        <taxon>Daucus sect. Daucus</taxon>
    </lineage>
</organism>
<reference key="1">
    <citation type="journal article" date="1996" name="Gene">
        <title>Cloning of a cDNA encoding DNA topoisomerase I in Daucus carota and expression analysis in relation to cell proliferation.</title>
        <authorList>
            <person name="Balestrazzi A."/>
            <person name="Toscano I."/>
            <person name="Bernacchia G."/>
            <person name="Luo M."/>
            <person name="Otte S."/>
            <person name="Carbonera D."/>
        </authorList>
    </citation>
    <scope>NUCLEOTIDE SEQUENCE [MRNA]</scope>
    <source>
        <strain>cv. Lunga di Amsterdam</strain>
    </source>
</reference>
<name>TOP1_DAUCA</name>
<accession>P93119</accession>
<protein>
    <recommendedName>
        <fullName>DNA topoisomerase 1</fullName>
        <ecNumber evidence="3">5.6.2.1</ecNumber>
    </recommendedName>
    <alternativeName>
        <fullName>DNA topoisomerase I</fullName>
    </alternativeName>
</protein>
<keyword id="KW-0238">DNA-binding</keyword>
<keyword id="KW-0413">Isomerase</keyword>
<keyword id="KW-0539">Nucleus</keyword>
<keyword id="KW-0799">Topoisomerase</keyword>
<comment type="function">
    <text evidence="1">Releases the supercoiling and torsional tension of DNA introduced during the DNA replication and transcription by transiently cleaving and rejoining one strand of the DNA duplex. Introduces a single-strand break via transesterification at a target site in duplex DNA. The scissile phosphodiester is attacked by the catalytic tyrosine of the enzyme, resulting in the formation of a DNA-(3'-phosphotyrosyl)-enzyme intermediate and the expulsion of a 5'-OH DNA strand. The free DNA strand then rotates around the intact phosphodiester bond on the opposing strand, thus removing DNA supercoils. Finally, in the religation step, the DNA 5'-OH attacks the covalent intermediate to expel the active-site tyrosine and restore the DNA phosphodiester backbone (By similarity).</text>
</comment>
<comment type="catalytic activity">
    <reaction evidence="3">
        <text>ATP-independent breakage of single-stranded DNA, followed by passage and rejoining.</text>
        <dbReference type="EC" id="5.6.2.1"/>
    </reaction>
</comment>
<comment type="subcellular location">
    <subcellularLocation>
        <location evidence="1">Nucleus</location>
    </subcellularLocation>
</comment>
<comment type="miscellaneous">
    <text>Eukaryotic topoisomerase I and II can relax both negative and positive supercoils, whereas prokaryotic enzymes relax only negative supercoils.</text>
</comment>
<comment type="similarity">
    <text evidence="5">Belongs to the type IB topoisomerase family.</text>
</comment>
<gene>
    <name type="primary">TOP1</name>
</gene>
<evidence type="ECO:0000250" key="1"/>
<evidence type="ECO:0000255" key="2">
    <source>
        <dbReference type="PROSITE-ProRule" id="PRU01382"/>
    </source>
</evidence>
<evidence type="ECO:0000255" key="3">
    <source>
        <dbReference type="PROSITE-ProRule" id="PRU10130"/>
    </source>
</evidence>
<evidence type="ECO:0000256" key="4">
    <source>
        <dbReference type="SAM" id="MobiDB-lite"/>
    </source>
</evidence>
<evidence type="ECO:0000305" key="5"/>
<sequence>MKSNPGITVIKQNASNVMEKTLKEEGQSRSNSEDSDDDKPLSHKLSSGALNGNSHHIRMGSNLSCPSPYTSPKPRIIKGPEDEMLLSSELQLNAGASNAESSDSDESKPLASELEDPSSSLNKRPLIQPKNSDPSPSKKAKLSEPSAPTNRKLKTAEQEEAAADDDPSISNRNKKSTTPASKVSDKKKRPDVSASVNKVDFSKSLKVPLVLVKGRNGQPLVHNGVIFPPLYKPHGVKMLYRENPVDLTPEQEEVATMFAVMLETEYMTKPKFRENFMSDWRKILGEKHIIQNLEDCDFTPIYEWHQREKEKKKQMSTDEKKAIKEGKDETRKEKYMWAVVDGMSREKVGNFRVGTTRVVQRSWRASKDPQVKKNVYSQIDITINIGKDAPIPEPPIPGERWKEIRHDNTVTWLAFWNDPINPKEFKYVFLAASSSLKGKVTREKYEKSRKLKDYIEGIRAAAYTKDFASKDSKKRQIAVATYLIDKLALRAGNEKDDDEADTVGCCTLKVENVETKRPNILKFDFLGKDSIRYQNEVEVEPRVFSAIEQFRSGKEGGDDLFDQLDTSKLNAHLKELMPGLTAKVFRTYNASITLDEMVRCKLLSRETKGGDVAEKVVVYQHANKEVAIICNHQRTVSKSHSAQMVRLNEKIEELKGLLKELQEDLTRVNKGKPPLKNSDGKPKRNLNLKRYKGKLLKLIQKLRKWSETRRLSVTKKIAQTNTKIEKMERDKETKEDLKTVALGTSKINYLDPRITVAWCKRHDVPIEKIFNKSLLAKFAWAMDVVLIFRF</sequence>
<proteinExistence type="evidence at transcript level"/>
<dbReference type="EC" id="5.6.2.1" evidence="3"/>
<dbReference type="EMBL" id="U60440">
    <property type="protein sequence ID" value="AAB41401.1"/>
    <property type="molecule type" value="mRNA"/>
</dbReference>
<dbReference type="PIR" id="JC5749">
    <property type="entry name" value="JC5749"/>
</dbReference>
<dbReference type="SMR" id="P93119"/>
<dbReference type="GO" id="GO:0005694">
    <property type="term" value="C:chromosome"/>
    <property type="evidence" value="ECO:0007669"/>
    <property type="project" value="InterPro"/>
</dbReference>
<dbReference type="GO" id="GO:0005730">
    <property type="term" value="C:nucleolus"/>
    <property type="evidence" value="ECO:0007669"/>
    <property type="project" value="TreeGrafter"/>
</dbReference>
<dbReference type="GO" id="GO:0003677">
    <property type="term" value="F:DNA binding"/>
    <property type="evidence" value="ECO:0007669"/>
    <property type="project" value="UniProtKB-KW"/>
</dbReference>
<dbReference type="GO" id="GO:0003917">
    <property type="term" value="F:DNA topoisomerase type I (single strand cut, ATP-independent) activity"/>
    <property type="evidence" value="ECO:0007669"/>
    <property type="project" value="UniProtKB-EC"/>
</dbReference>
<dbReference type="GO" id="GO:0007059">
    <property type="term" value="P:chromosome segregation"/>
    <property type="evidence" value="ECO:0007669"/>
    <property type="project" value="TreeGrafter"/>
</dbReference>
<dbReference type="GO" id="GO:0006260">
    <property type="term" value="P:DNA replication"/>
    <property type="evidence" value="ECO:0007669"/>
    <property type="project" value="TreeGrafter"/>
</dbReference>
<dbReference type="GO" id="GO:0006265">
    <property type="term" value="P:DNA topological change"/>
    <property type="evidence" value="ECO:0007669"/>
    <property type="project" value="InterPro"/>
</dbReference>
<dbReference type="CDD" id="cd00659">
    <property type="entry name" value="Topo_IB_C"/>
    <property type="match status" value="1"/>
</dbReference>
<dbReference type="FunFam" id="1.10.10.41:FF:000001">
    <property type="entry name" value="DNA topoisomerase I"/>
    <property type="match status" value="1"/>
</dbReference>
<dbReference type="FunFam" id="1.10.132.10:FF:000002">
    <property type="entry name" value="DNA topoisomerase I"/>
    <property type="match status" value="1"/>
</dbReference>
<dbReference type="FunFam" id="3.90.15.10:FF:000003">
    <property type="entry name" value="DNA topoisomerase I"/>
    <property type="match status" value="1"/>
</dbReference>
<dbReference type="Gene3D" id="1.10.132.10">
    <property type="match status" value="1"/>
</dbReference>
<dbReference type="Gene3D" id="2.170.11.10">
    <property type="entry name" value="DNA Topoisomerase I, domain 2"/>
    <property type="match status" value="1"/>
</dbReference>
<dbReference type="Gene3D" id="3.90.15.10">
    <property type="entry name" value="Topoisomerase I, Chain A, domain 3"/>
    <property type="match status" value="1"/>
</dbReference>
<dbReference type="Gene3D" id="1.10.10.41">
    <property type="entry name" value="Yeast DNA topoisomerase - domain 1"/>
    <property type="match status" value="1"/>
</dbReference>
<dbReference type="InterPro" id="IPR011010">
    <property type="entry name" value="DNA_brk_join_enz"/>
</dbReference>
<dbReference type="InterPro" id="IPR013034">
    <property type="entry name" value="DNA_topo_DNA_db_N_dom1"/>
</dbReference>
<dbReference type="InterPro" id="IPR013030">
    <property type="entry name" value="DNA_topo_DNA_db_N_dom2"/>
</dbReference>
<dbReference type="InterPro" id="IPR001631">
    <property type="entry name" value="TopoI"/>
</dbReference>
<dbReference type="InterPro" id="IPR025834">
    <property type="entry name" value="TopoI_C_dom"/>
</dbReference>
<dbReference type="InterPro" id="IPR014711">
    <property type="entry name" value="TopoI_cat_a-hlx-sub_euk"/>
</dbReference>
<dbReference type="InterPro" id="IPR014727">
    <property type="entry name" value="TopoI_cat_a/b-sub_euk"/>
</dbReference>
<dbReference type="InterPro" id="IPR013500">
    <property type="entry name" value="TopoI_cat_euk"/>
</dbReference>
<dbReference type="InterPro" id="IPR008336">
    <property type="entry name" value="TopoI_DNA-bd_euk"/>
</dbReference>
<dbReference type="InterPro" id="IPR036202">
    <property type="entry name" value="TopoI_DNA-bd_euk_N_sf"/>
</dbReference>
<dbReference type="InterPro" id="IPR013499">
    <property type="entry name" value="TopoI_euk"/>
</dbReference>
<dbReference type="InterPro" id="IPR018521">
    <property type="entry name" value="TopoIB_AS"/>
</dbReference>
<dbReference type="InterPro" id="IPR051062">
    <property type="entry name" value="Topoisomerase_IB"/>
</dbReference>
<dbReference type="PANTHER" id="PTHR10290:SF23">
    <property type="entry name" value="DNA TOPOISOMERASE 1 BETA"/>
    <property type="match status" value="1"/>
</dbReference>
<dbReference type="PANTHER" id="PTHR10290">
    <property type="entry name" value="DNA TOPOISOMERASE I"/>
    <property type="match status" value="1"/>
</dbReference>
<dbReference type="Pfam" id="PF14370">
    <property type="entry name" value="Topo_C_assoc"/>
    <property type="match status" value="1"/>
</dbReference>
<dbReference type="Pfam" id="PF01028">
    <property type="entry name" value="Topoisom_I"/>
    <property type="match status" value="1"/>
</dbReference>
<dbReference type="Pfam" id="PF02919">
    <property type="entry name" value="Topoisom_I_N"/>
    <property type="match status" value="1"/>
</dbReference>
<dbReference type="PRINTS" id="PR00416">
    <property type="entry name" value="EUTPISMRASEI"/>
</dbReference>
<dbReference type="SMART" id="SM00435">
    <property type="entry name" value="TOPEUc"/>
    <property type="match status" value="1"/>
</dbReference>
<dbReference type="SUPFAM" id="SSF56349">
    <property type="entry name" value="DNA breaking-rejoining enzymes"/>
    <property type="match status" value="1"/>
</dbReference>
<dbReference type="SUPFAM" id="SSF56741">
    <property type="entry name" value="Eukaryotic DNA topoisomerase I, N-terminal DNA-binding fragment"/>
    <property type="match status" value="1"/>
</dbReference>
<dbReference type="PROSITE" id="PS00176">
    <property type="entry name" value="TOPO_IB_1"/>
    <property type="match status" value="1"/>
</dbReference>
<dbReference type="PROSITE" id="PS52038">
    <property type="entry name" value="TOPO_IB_2"/>
    <property type="match status" value="1"/>
</dbReference>
<feature type="chain" id="PRO_0000145207" description="DNA topoisomerase 1">
    <location>
        <begin position="1"/>
        <end position="790"/>
    </location>
</feature>
<feature type="domain" description="Topo IB-type catalytic" evidence="2">
    <location>
        <begin position="433"/>
        <end position="790"/>
    </location>
</feature>
<feature type="region of interest" description="Disordered" evidence="4">
    <location>
        <begin position="1"/>
        <end position="196"/>
    </location>
</feature>
<feature type="region of interest" description="Interaction with DNA" evidence="1">
    <location>
        <begin position="426"/>
        <end position="427"/>
    </location>
</feature>
<feature type="region of interest" description="Interaction with DNA" evidence="1">
    <location>
        <begin position="490"/>
        <end position="495"/>
    </location>
</feature>
<feature type="region of interest" description="Interaction with DNA" evidence="1">
    <location>
        <begin position="581"/>
        <end position="583"/>
    </location>
</feature>
<feature type="compositionally biased region" description="Polar residues" evidence="4">
    <location>
        <begin position="1"/>
        <end position="18"/>
    </location>
</feature>
<feature type="compositionally biased region" description="Polar residues" evidence="4">
    <location>
        <begin position="44"/>
        <end position="54"/>
    </location>
</feature>
<feature type="compositionally biased region" description="Polar residues" evidence="4">
    <location>
        <begin position="61"/>
        <end position="70"/>
    </location>
</feature>
<feature type="compositionally biased region" description="Acidic residues" evidence="4">
    <location>
        <begin position="158"/>
        <end position="167"/>
    </location>
</feature>
<feature type="compositionally biased region" description="Polar residues" evidence="4">
    <location>
        <begin position="168"/>
        <end position="181"/>
    </location>
</feature>
<feature type="active site" description="O-(3'-phospho-DNA)-tyrosine intermediate" evidence="2 3">
    <location>
        <position position="749"/>
    </location>
</feature>
<feature type="site" description="Interaction with DNA" evidence="1">
    <location>
        <position position="412"/>
    </location>
</feature>
<feature type="site" description="Interaction with DNA" evidence="1">
    <location>
        <position position="444"/>
    </location>
</feature>
<feature type="site" description="Interaction with DNA" evidence="1">
    <location>
        <position position="502"/>
    </location>
</feature>
<feature type="site" description="Interaction with DNA" evidence="1">
    <location>
        <position position="528"/>
    </location>
</feature>
<feature type="site" description="Interaction with DNA" evidence="1">
    <location>
        <position position="570"/>
    </location>
</feature>
<feature type="site" description="Interaction with DNA" evidence="1">
    <location>
        <position position="632"/>
    </location>
</feature>
<feature type="site" description="Interaction with DNA" evidence="1">
    <location>
        <position position="650"/>
    </location>
</feature>